<keyword id="KW-1003">Cell membrane</keyword>
<keyword id="KW-0342">GTP-binding</keyword>
<keyword id="KW-0449">Lipoprotein</keyword>
<keyword id="KW-0472">Membrane</keyword>
<keyword id="KW-0547">Nucleotide-binding</keyword>
<keyword id="KW-0636">Prenylation</keyword>
<feature type="chain" id="PRO_0000121170" description="Ras-related protein Rab11D">
    <location>
        <begin position="1"/>
        <end position="218"/>
    </location>
</feature>
<feature type="short sequence motif" description="Effector region" evidence="1">
    <location>
        <begin position="42"/>
        <end position="50"/>
    </location>
</feature>
<feature type="binding site" evidence="1">
    <location>
        <begin position="20"/>
        <end position="27"/>
    </location>
    <ligand>
        <name>GTP</name>
        <dbReference type="ChEBI" id="CHEBI:37565"/>
    </ligand>
</feature>
<feature type="binding site" evidence="1">
    <location>
        <begin position="68"/>
        <end position="72"/>
    </location>
    <ligand>
        <name>GTP</name>
        <dbReference type="ChEBI" id="CHEBI:37565"/>
    </ligand>
</feature>
<feature type="binding site" evidence="1">
    <location>
        <begin position="126"/>
        <end position="129"/>
    </location>
    <ligand>
        <name>GTP</name>
        <dbReference type="ChEBI" id="CHEBI:37565"/>
    </ligand>
</feature>
<feature type="lipid moiety-binding region" description="S-geranylgeranyl cysteine" evidence="1">
    <location>
        <position position="215"/>
    </location>
</feature>
<feature type="lipid moiety-binding region" description="S-geranylgeranyl cysteine" evidence="1">
    <location>
        <position position="216"/>
    </location>
</feature>
<proteinExistence type="evidence at transcript level"/>
<dbReference type="EMBL" id="Z73952">
    <property type="protein sequence ID" value="CAA98180.1"/>
    <property type="molecule type" value="mRNA"/>
</dbReference>
<dbReference type="SMR" id="Q40194"/>
<dbReference type="OrthoDB" id="9989112at2759"/>
<dbReference type="GO" id="GO:0005886">
    <property type="term" value="C:plasma membrane"/>
    <property type="evidence" value="ECO:0007669"/>
    <property type="project" value="UniProtKB-SubCell"/>
</dbReference>
<dbReference type="GO" id="GO:0005525">
    <property type="term" value="F:GTP binding"/>
    <property type="evidence" value="ECO:0007669"/>
    <property type="project" value="UniProtKB-KW"/>
</dbReference>
<dbReference type="GO" id="GO:0003924">
    <property type="term" value="F:GTPase activity"/>
    <property type="evidence" value="ECO:0007669"/>
    <property type="project" value="InterPro"/>
</dbReference>
<dbReference type="CDD" id="cd01868">
    <property type="entry name" value="Rab11_like"/>
    <property type="match status" value="1"/>
</dbReference>
<dbReference type="FunFam" id="3.40.50.300:FF:000067">
    <property type="entry name" value="ras-related protein RABA1f"/>
    <property type="match status" value="1"/>
</dbReference>
<dbReference type="Gene3D" id="3.40.50.300">
    <property type="entry name" value="P-loop containing nucleotide triphosphate hydrolases"/>
    <property type="match status" value="1"/>
</dbReference>
<dbReference type="InterPro" id="IPR027417">
    <property type="entry name" value="P-loop_NTPase"/>
</dbReference>
<dbReference type="InterPro" id="IPR050209">
    <property type="entry name" value="Rab_GTPases_membrane_traffic"/>
</dbReference>
<dbReference type="InterPro" id="IPR005225">
    <property type="entry name" value="Small_GTP-bd"/>
</dbReference>
<dbReference type="InterPro" id="IPR001806">
    <property type="entry name" value="Small_GTPase"/>
</dbReference>
<dbReference type="NCBIfam" id="TIGR00231">
    <property type="entry name" value="small_GTP"/>
    <property type="match status" value="1"/>
</dbReference>
<dbReference type="PANTHER" id="PTHR47979">
    <property type="entry name" value="DRAB11-RELATED"/>
    <property type="match status" value="1"/>
</dbReference>
<dbReference type="Pfam" id="PF00071">
    <property type="entry name" value="Ras"/>
    <property type="match status" value="1"/>
</dbReference>
<dbReference type="PRINTS" id="PR00449">
    <property type="entry name" value="RASTRNSFRMNG"/>
</dbReference>
<dbReference type="SMART" id="SM00175">
    <property type="entry name" value="RAB"/>
    <property type="match status" value="1"/>
</dbReference>
<dbReference type="SMART" id="SM00176">
    <property type="entry name" value="RAN"/>
    <property type="match status" value="1"/>
</dbReference>
<dbReference type="SMART" id="SM00173">
    <property type="entry name" value="RAS"/>
    <property type="match status" value="1"/>
</dbReference>
<dbReference type="SMART" id="SM00174">
    <property type="entry name" value="RHO"/>
    <property type="match status" value="1"/>
</dbReference>
<dbReference type="SUPFAM" id="SSF52540">
    <property type="entry name" value="P-loop containing nucleoside triphosphate hydrolases"/>
    <property type="match status" value="1"/>
</dbReference>
<dbReference type="PROSITE" id="PS51419">
    <property type="entry name" value="RAB"/>
    <property type="match status" value="1"/>
</dbReference>
<evidence type="ECO:0000250" key="1"/>
<evidence type="ECO:0000305" key="2"/>
<organism>
    <name type="scientific">Lotus japonicus</name>
    <name type="common">Lotus corniculatus var. japonicus</name>
    <dbReference type="NCBI Taxonomy" id="34305"/>
    <lineage>
        <taxon>Eukaryota</taxon>
        <taxon>Viridiplantae</taxon>
        <taxon>Streptophyta</taxon>
        <taxon>Embryophyta</taxon>
        <taxon>Tracheophyta</taxon>
        <taxon>Spermatophyta</taxon>
        <taxon>Magnoliopsida</taxon>
        <taxon>eudicotyledons</taxon>
        <taxon>Gunneridae</taxon>
        <taxon>Pentapetalae</taxon>
        <taxon>rosids</taxon>
        <taxon>fabids</taxon>
        <taxon>Fabales</taxon>
        <taxon>Fabaceae</taxon>
        <taxon>Papilionoideae</taxon>
        <taxon>50 kb inversion clade</taxon>
        <taxon>NPAAA clade</taxon>
        <taxon>Hologalegina</taxon>
        <taxon>robinioid clade</taxon>
        <taxon>Loteae</taxon>
        <taxon>Lotus</taxon>
    </lineage>
</organism>
<sequence length="218" mass="24163">MGGYRTDDEYDYLFKLVLIGDSGVGKSNLLSRFTKNEFNLESKSTIGVEFATKTLNVDAKVVKAQIWDTAGQERYRAITSAYYRGAVGALLVYDVTRRATFENAARWLKELRDHTDPNIVVMLIGNKSDLRHLVAVPTEDGKSFAERESLYFMETSALEATNVENAFTEVLTQIYRIVSKRAVEAGDSGSSSGLPSKGQTINVKEDSSVLKRFGCCST</sequence>
<accession>Q40194</accession>
<name>RB11D_LOTJA</name>
<protein>
    <recommendedName>
        <fullName>Ras-related protein Rab11D</fullName>
    </recommendedName>
</protein>
<comment type="subcellular location">
    <subcellularLocation>
        <location evidence="2">Cell membrane</location>
        <topology evidence="2">Lipid-anchor</topology>
        <orientation evidence="2">Cytoplasmic side</orientation>
    </subcellularLocation>
</comment>
<comment type="similarity">
    <text evidence="2">Belongs to the small GTPase superfamily. Rab family.</text>
</comment>
<gene>
    <name type="primary">RAB11D</name>
</gene>
<reference key="1">
    <citation type="journal article" date="1997" name="Plant J.">
        <title>Identification of new protein species among 33 different small GTP-binding proteins encoded by cDNAs from Lotus japonicus, and expression of corresponding mRNAs in developing root nodules.</title>
        <authorList>
            <person name="Borg S."/>
            <person name="Brandstrup B."/>
            <person name="Jensen T.J."/>
            <person name="Poulsen C."/>
        </authorList>
    </citation>
    <scope>NUCLEOTIDE SEQUENCE [MRNA]</scope>
    <source>
        <strain>cv. Gifu / B-129</strain>
        <tissue>Root nodule</tissue>
    </source>
</reference>